<gene>
    <name type="primary">cit 1-2</name>
</gene>
<evidence type="ECO:0000250" key="1">
    <source>
        <dbReference type="UniProtKB" id="P85253"/>
    </source>
</evidence>
<evidence type="ECO:0000255" key="2"/>
<evidence type="ECO:0000269" key="3">
    <source>
    </source>
</evidence>
<evidence type="ECO:0000269" key="4">
    <source>
    </source>
</evidence>
<evidence type="ECO:0000303" key="5">
    <source>
    </source>
</evidence>
<evidence type="ECO:0000303" key="6">
    <source>
    </source>
</evidence>
<evidence type="ECO:0000305" key="7"/>
<keyword id="KW-0044">Antibiotic</keyword>
<keyword id="KW-0929">Antimicrobial</keyword>
<keyword id="KW-0204">Cytolysis</keyword>
<keyword id="KW-0903">Direct protein sequencing</keyword>
<keyword id="KW-0354">Hemolysis</keyword>
<keyword id="KW-0964">Secreted</keyword>
<keyword id="KW-0732">Signal</keyword>
<keyword id="KW-0800">Toxin</keyword>
<name>CTX12_LACTA</name>
<reference evidence="7" key="1">
    <citation type="journal article" date="2008" name="Biochem. J.">
        <title>Cyto-insectotoxins, a novel class of cytolytic and insecticidal peptides from spider venom.</title>
        <authorList>
            <person name="Vassilevski A.A."/>
            <person name="Kozlov S.A."/>
            <person name="Samsonova O.V."/>
            <person name="Egorova N.S."/>
            <person name="Karpunin D.V."/>
            <person name="Pluzhnikov K.A."/>
            <person name="Feofanov A.V."/>
            <person name="Grishin E.V."/>
        </authorList>
    </citation>
    <scope>NUCLEOTIDE SEQUENCE [MRNA]</scope>
    <scope>PROTEIN SEQUENCE OF 61-129</scope>
    <scope>SUBCELLULAR LOCATION</scope>
    <scope>TISSUE SPECIFICITY</scope>
    <source>
        <tissue evidence="3">Venom</tissue>
        <tissue>Venom gland</tissue>
    </source>
</reference>
<reference key="2">
    <citation type="journal article" date="2016" name="Biochem. J.">
        <title>Lachesana tarabaevi, an expert in membrane-active toxins.</title>
        <authorList>
            <person name="Kuzmenkov A.I."/>
            <person name="Sachkova M.Y."/>
            <person name="Kovalchuk S.I."/>
            <person name="Grishin E.V."/>
            <person name="Vassilevski A.A."/>
        </authorList>
    </citation>
    <scope>SUBCELLULAR LOCATION</scope>
    <scope>PQM MOTIF</scope>
    <scope>MASS SPECTROMETRY</scope>
    <source>
        <tissue evidence="6">Venom</tissue>
    </source>
</reference>
<organism>
    <name type="scientific">Lachesana tarabaevi</name>
    <name type="common">Spider</name>
    <dbReference type="NCBI Taxonomy" id="379576"/>
    <lineage>
        <taxon>Eukaryota</taxon>
        <taxon>Metazoa</taxon>
        <taxon>Ecdysozoa</taxon>
        <taxon>Arthropoda</taxon>
        <taxon>Chelicerata</taxon>
        <taxon>Arachnida</taxon>
        <taxon>Araneae</taxon>
        <taxon>Araneomorphae</taxon>
        <taxon>Entelegynae</taxon>
        <taxon>Entelegynae incertae sedis</taxon>
        <taxon>Zodariidae</taxon>
        <taxon>Lachesana</taxon>
    </lineage>
</organism>
<protein>
    <recommendedName>
        <fullName>M-zodatoxin-Lt8b</fullName>
        <shortName>M-ZDTX-Lt8b</shortName>
    </recommendedName>
    <alternativeName>
        <fullName evidence="5">Cytoinsectotoxin-1b</fullName>
        <shortName evidence="5">CIT-1b</shortName>
    </alternativeName>
</protein>
<sequence>MKYFVVALALVAAFACIAESKPAESEHELAEVEEENELADLEDAVWLEHLADLSDLEEARGFFGNTWKKIKGKADKIMLKKAVKLMVKKEGISKEEAQAKVDAMSKKQIRLYLLKYYGKKALQKASEKL</sequence>
<feature type="signal peptide" evidence="2">
    <location>
        <begin position="1"/>
        <end position="20"/>
    </location>
</feature>
<feature type="propeptide" id="PRO_0000366075" evidence="3">
    <location>
        <begin position="21"/>
        <end position="60"/>
    </location>
</feature>
<feature type="chain" id="PRO_0000337159" description="M-zodatoxin-Lt8b">
    <location>
        <begin position="61"/>
        <end position="129"/>
    </location>
</feature>
<feature type="short sequence motif" description="Processing quadruplet motif" evidence="6">
    <location>
        <begin position="57"/>
        <end position="60"/>
    </location>
</feature>
<accession>P85254</accession>
<accession>B3W6I0</accession>
<dbReference type="EMBL" id="FM165475">
    <property type="protein sequence ID" value="CAQ63551.1"/>
    <property type="molecule type" value="mRNA"/>
</dbReference>
<dbReference type="SMR" id="P85254"/>
<dbReference type="ArachnoServer" id="AS000439">
    <property type="toxin name" value="M-zodatoxin-Lt8b"/>
</dbReference>
<dbReference type="GO" id="GO:0005576">
    <property type="term" value="C:extracellular region"/>
    <property type="evidence" value="ECO:0000250"/>
    <property type="project" value="UniProtKB"/>
</dbReference>
<dbReference type="GO" id="GO:0090729">
    <property type="term" value="F:toxin activity"/>
    <property type="evidence" value="ECO:0007669"/>
    <property type="project" value="UniProtKB-KW"/>
</dbReference>
<dbReference type="GO" id="GO:0050829">
    <property type="term" value="P:defense response to Gram-negative bacterium"/>
    <property type="evidence" value="ECO:0000250"/>
    <property type="project" value="UniProtKB"/>
</dbReference>
<dbReference type="GO" id="GO:0050830">
    <property type="term" value="P:defense response to Gram-positive bacterium"/>
    <property type="evidence" value="ECO:0000250"/>
    <property type="project" value="UniProtKB"/>
</dbReference>
<dbReference type="GO" id="GO:0031640">
    <property type="term" value="P:killing of cells of another organism"/>
    <property type="evidence" value="ECO:0007669"/>
    <property type="project" value="UniProtKB-KW"/>
</dbReference>
<dbReference type="InterPro" id="IPR018802">
    <property type="entry name" value="Latarcin_precursor"/>
</dbReference>
<dbReference type="Pfam" id="PF10279">
    <property type="entry name" value="Latarcin"/>
    <property type="match status" value="1"/>
</dbReference>
<proteinExistence type="evidence at protein level"/>
<comment type="function">
    <text evidence="1">Insecticidal, cytolytic and antimicrobial peptide. Forms voltage-dependent, ion-permeable channels in membranes. At high concentration causes cell membrane lysis (By similarity).</text>
</comment>
<comment type="subcellular location">
    <subcellularLocation>
        <location evidence="3 4">Secreted</location>
    </subcellularLocation>
</comment>
<comment type="tissue specificity">
    <text evidence="3">Expressed by the venom gland.</text>
</comment>
<comment type="domain">
    <text evidence="1">Both the N-terminus (61-94) and the C-terminus (99-129) of the mature peptide form alpha-helices which probably disrupt target cell membranes. The linker region (95-98) probably derives from a processing quadruplet motif (PQM), found in propeptides of many zodatoxins, hinting at a fusion of two originally separate membrane-active peptides.</text>
</comment>
<comment type="PTM">
    <text evidence="6">Cleavage of the propeptide depends on the processing quadruplet motif (XXXR, with at least one of X being E).</text>
</comment>
<comment type="mass spectrometry"/>
<comment type="similarity">
    <text evidence="7">Belongs to the cationic peptide 06 (cytoinsectotoxin) family.</text>
</comment>